<sequence>MSANILVFDSGVGGLSILAAVREQLPSANYCYLFDNARLPYGELDEQELIQGCVTLISQAVIQCQADIVVVACNSASTLILPALRACLKVPVVGVVPAIKPAAALSQKKHLGLLATPGTVNRQYTQDLIDQFASDCRVDRFGSSELVYLAEDKMAQRPVDSEALHRILAPIKASGLDTLILGCTHFPILREELQSYLGEGVHLLDSSNAIAARVVSLLEPSMSGEIGKSQALYTTDSICEGLRKTLAAWGFRSATAFRDSLMPIGS</sequence>
<protein>
    <recommendedName>
        <fullName evidence="1">Glutamate racemase</fullName>
        <ecNumber evidence="1">5.1.1.3</ecNumber>
    </recommendedName>
</protein>
<keyword id="KW-0133">Cell shape</keyword>
<keyword id="KW-0961">Cell wall biogenesis/degradation</keyword>
<keyword id="KW-0413">Isomerase</keyword>
<keyword id="KW-0573">Peptidoglycan synthesis</keyword>
<keyword id="KW-1185">Reference proteome</keyword>
<comment type="function">
    <text evidence="1">Provides the (R)-glutamate required for cell wall biosynthesis.</text>
</comment>
<comment type="catalytic activity">
    <reaction evidence="1">
        <text>L-glutamate = D-glutamate</text>
        <dbReference type="Rhea" id="RHEA:12813"/>
        <dbReference type="ChEBI" id="CHEBI:29985"/>
        <dbReference type="ChEBI" id="CHEBI:29986"/>
        <dbReference type="EC" id="5.1.1.3"/>
    </reaction>
</comment>
<comment type="pathway">
    <text evidence="1">Cell wall biogenesis; peptidoglycan biosynthesis.</text>
</comment>
<comment type="similarity">
    <text evidence="1">Belongs to the aspartate/glutamate racemases family.</text>
</comment>
<reference key="1">
    <citation type="submission" date="2007-03" db="EMBL/GenBank/DDBJ databases">
        <title>Complete sequence of Shewanella loihica PV-4.</title>
        <authorList>
            <consortium name="US DOE Joint Genome Institute"/>
            <person name="Copeland A."/>
            <person name="Lucas S."/>
            <person name="Lapidus A."/>
            <person name="Barry K."/>
            <person name="Detter J.C."/>
            <person name="Glavina del Rio T."/>
            <person name="Hammon N."/>
            <person name="Israni S."/>
            <person name="Dalin E."/>
            <person name="Tice H."/>
            <person name="Pitluck S."/>
            <person name="Chain P."/>
            <person name="Malfatti S."/>
            <person name="Shin M."/>
            <person name="Vergez L."/>
            <person name="Schmutz J."/>
            <person name="Larimer F."/>
            <person name="Land M."/>
            <person name="Hauser L."/>
            <person name="Kyrpides N."/>
            <person name="Mikhailova N."/>
            <person name="Romine M.F."/>
            <person name="Serres G."/>
            <person name="Fredrickson J."/>
            <person name="Tiedje J."/>
            <person name="Richardson P."/>
        </authorList>
    </citation>
    <scope>NUCLEOTIDE SEQUENCE [LARGE SCALE GENOMIC DNA]</scope>
    <source>
        <strain>ATCC BAA-1088 / PV-4</strain>
    </source>
</reference>
<name>MURI_SHELP</name>
<gene>
    <name evidence="1" type="primary">murI</name>
    <name type="ordered locus">Shew_0139</name>
</gene>
<accession>A3Q963</accession>
<proteinExistence type="inferred from homology"/>
<dbReference type="EC" id="5.1.1.3" evidence="1"/>
<dbReference type="EMBL" id="CP000606">
    <property type="protein sequence ID" value="ABO22011.1"/>
    <property type="molecule type" value="Genomic_DNA"/>
</dbReference>
<dbReference type="RefSeq" id="WP_011863948.1">
    <property type="nucleotide sequence ID" value="NC_009092.1"/>
</dbReference>
<dbReference type="SMR" id="A3Q963"/>
<dbReference type="STRING" id="323850.Shew_0139"/>
<dbReference type="KEGG" id="slo:Shew_0139"/>
<dbReference type="eggNOG" id="COG0796">
    <property type="taxonomic scope" value="Bacteria"/>
</dbReference>
<dbReference type="HOGENOM" id="CLU_052344_2_0_6"/>
<dbReference type="OrthoDB" id="9801055at2"/>
<dbReference type="UniPathway" id="UPA00219"/>
<dbReference type="Proteomes" id="UP000001558">
    <property type="component" value="Chromosome"/>
</dbReference>
<dbReference type="GO" id="GO:0008881">
    <property type="term" value="F:glutamate racemase activity"/>
    <property type="evidence" value="ECO:0007669"/>
    <property type="project" value="UniProtKB-UniRule"/>
</dbReference>
<dbReference type="GO" id="GO:0071555">
    <property type="term" value="P:cell wall organization"/>
    <property type="evidence" value="ECO:0007669"/>
    <property type="project" value="UniProtKB-KW"/>
</dbReference>
<dbReference type="GO" id="GO:0009252">
    <property type="term" value="P:peptidoglycan biosynthetic process"/>
    <property type="evidence" value="ECO:0007669"/>
    <property type="project" value="UniProtKB-UniRule"/>
</dbReference>
<dbReference type="GO" id="GO:0008360">
    <property type="term" value="P:regulation of cell shape"/>
    <property type="evidence" value="ECO:0007669"/>
    <property type="project" value="UniProtKB-KW"/>
</dbReference>
<dbReference type="FunFam" id="3.40.50.1860:FF:000001">
    <property type="entry name" value="Glutamate racemase"/>
    <property type="match status" value="1"/>
</dbReference>
<dbReference type="Gene3D" id="3.40.50.1860">
    <property type="match status" value="2"/>
</dbReference>
<dbReference type="HAMAP" id="MF_00258">
    <property type="entry name" value="Glu_racemase"/>
    <property type="match status" value="1"/>
</dbReference>
<dbReference type="InterPro" id="IPR015942">
    <property type="entry name" value="Asp/Glu/hydantoin_racemase"/>
</dbReference>
<dbReference type="InterPro" id="IPR001920">
    <property type="entry name" value="Asp/Glu_race"/>
</dbReference>
<dbReference type="InterPro" id="IPR018187">
    <property type="entry name" value="Asp/Glu_racemase_AS_1"/>
</dbReference>
<dbReference type="InterPro" id="IPR033134">
    <property type="entry name" value="Asp/Glu_racemase_AS_2"/>
</dbReference>
<dbReference type="InterPro" id="IPR004391">
    <property type="entry name" value="Glu_race"/>
</dbReference>
<dbReference type="NCBIfam" id="TIGR00067">
    <property type="entry name" value="glut_race"/>
    <property type="match status" value="1"/>
</dbReference>
<dbReference type="PANTHER" id="PTHR21198">
    <property type="entry name" value="GLUTAMATE RACEMASE"/>
    <property type="match status" value="1"/>
</dbReference>
<dbReference type="PANTHER" id="PTHR21198:SF2">
    <property type="entry name" value="GLUTAMATE RACEMASE"/>
    <property type="match status" value="1"/>
</dbReference>
<dbReference type="Pfam" id="PF01177">
    <property type="entry name" value="Asp_Glu_race"/>
    <property type="match status" value="1"/>
</dbReference>
<dbReference type="SUPFAM" id="SSF53681">
    <property type="entry name" value="Aspartate/glutamate racemase"/>
    <property type="match status" value="2"/>
</dbReference>
<dbReference type="PROSITE" id="PS00923">
    <property type="entry name" value="ASP_GLU_RACEMASE_1"/>
    <property type="match status" value="1"/>
</dbReference>
<dbReference type="PROSITE" id="PS00924">
    <property type="entry name" value="ASP_GLU_RACEMASE_2"/>
    <property type="match status" value="1"/>
</dbReference>
<evidence type="ECO:0000255" key="1">
    <source>
        <dbReference type="HAMAP-Rule" id="MF_00258"/>
    </source>
</evidence>
<organism>
    <name type="scientific">Shewanella loihica (strain ATCC BAA-1088 / PV-4)</name>
    <dbReference type="NCBI Taxonomy" id="323850"/>
    <lineage>
        <taxon>Bacteria</taxon>
        <taxon>Pseudomonadati</taxon>
        <taxon>Pseudomonadota</taxon>
        <taxon>Gammaproteobacteria</taxon>
        <taxon>Alteromonadales</taxon>
        <taxon>Shewanellaceae</taxon>
        <taxon>Shewanella</taxon>
    </lineage>
</organism>
<feature type="chain" id="PRO_1000047607" description="Glutamate racemase">
    <location>
        <begin position="1"/>
        <end position="266"/>
    </location>
</feature>
<feature type="active site" description="Proton donor/acceptor" evidence="1">
    <location>
        <position position="73"/>
    </location>
</feature>
<feature type="active site" description="Proton donor/acceptor" evidence="1">
    <location>
        <position position="183"/>
    </location>
</feature>
<feature type="binding site" evidence="1">
    <location>
        <begin position="9"/>
        <end position="10"/>
    </location>
    <ligand>
        <name>substrate</name>
    </ligand>
</feature>
<feature type="binding site" evidence="1">
    <location>
        <begin position="41"/>
        <end position="42"/>
    </location>
    <ligand>
        <name>substrate</name>
    </ligand>
</feature>
<feature type="binding site" evidence="1">
    <location>
        <begin position="74"/>
        <end position="75"/>
    </location>
    <ligand>
        <name>substrate</name>
    </ligand>
</feature>
<feature type="binding site" evidence="1">
    <location>
        <begin position="184"/>
        <end position="185"/>
    </location>
    <ligand>
        <name>substrate</name>
    </ligand>
</feature>